<name>DI32L_ARATH</name>
<protein>
    <recommendedName>
        <fullName>Inactive exonuclease DIS3L2</fullName>
    </recommendedName>
    <alternativeName>
        <fullName>DIS3-like exonuclease 2</fullName>
    </alternativeName>
    <alternativeName>
        <fullName evidence="7">Protein SUPPRESSOR OF VARICOSE</fullName>
    </alternativeName>
    <alternativeName>
        <fullName evidence="9">RRP44 homolog B</fullName>
    </alternativeName>
    <alternativeName>
        <fullName evidence="9">Ribosomal RNA-processing protein 44 homolog B</fullName>
        <shortName evidence="8">AtRRP44B</shortName>
    </alternativeName>
</protein>
<proteinExistence type="evidence at transcript level"/>
<keyword id="KW-0963">Cytoplasm</keyword>
<keyword id="KW-0460">Magnesium</keyword>
<keyword id="KW-0479">Metal-binding</keyword>
<keyword id="KW-1185">Reference proteome</keyword>
<keyword id="KW-0694">RNA-binding</keyword>
<comment type="function">
    <text evidence="5 6">Probable inactive 3'-5'-exoribonuclease. Is unable to complement the growth defect of a yeast mutant lacking RRP44 exonuclease (PubMed:24244451).</text>
</comment>
<comment type="subcellular location">
    <subcellularLocation>
        <location evidence="4">Cytoplasm</location>
    </subcellularLocation>
    <text evidence="4">Localizes to cytoplasmic foci.</text>
</comment>
<comment type="similarity">
    <text evidence="9">Belongs to the RNR ribonuclease family. DIS3L2 subfamily.</text>
</comment>
<comment type="caution">
    <text evidence="9">The protein in cv. Landsberg erecta (AC P0DM58) and cv. Columbia only differ by one residue in position 705 (a Pro and Arg residue, respectively); this variation leading to inactivate the protein in cv. Columbia.</text>
</comment>
<comment type="sequence caution" evidence="9">
    <conflict type="erroneous initiation">
        <sequence resource="EMBL-CDS" id="BAD94251"/>
    </conflict>
    <text>Truncated N-terminus.</text>
</comment>
<sequence>MKSASSEQSVERIENGHKKKRNRPQKQNRRSKQSSVPIEDAHVEESLDGRDSSRSKAKDSTSSSKQQRPNTDELEAMRASNVAFNSMPPMRAESGYPRRSASPLLSSPEVSKQLLSKSCPDPRACEQSPGMNGELFQQIEGSSQRKIFSSHWSLDAVTEALEKGEAFKALFRVNAHNRNEAYCKIDGVPTDILINGNVCQSRAVEGDTVVIKLDPLSLWPKMKGFVTESAAKPEGTNSPPEKDDKKARQKNGIDVVEGFEDGFSKNKSSVIGKGAKNGVTPSSPPSLDSCLGSFCEQKGNCSAVDKLCGILSSFPHKRPTGQVVAVVEKSLVRDSIVGLLDVKGWIHYKESDPKRCKSPLSLSDDEYVQLMPADPRFPKLIVPFHVLPGSIRARLENLDPNLEAELVAAQIVDWGEGSPFPVAQITHLFGRGSELEPQINAILYQNSVCDSDFSPGSLTSLPRVPWEVPEEEVQRRKDLRDLCVLTIDPSTATDLDDALSVQSLPGGFFRVGVHIADVSYFVLPETALDTEARFRSTSVYLMQRKISMLPPLLSENVGSLSPGADRLAFSILWDLNREGDVIDRWIGRTIIRSCCKLSYDHAQDIIDGKSDVAENGWPALHGSFKWCDVTRSVKQLSEISTTLRQKRFRNGALQLENSKPVFLFDEHGVPYDFVTCSRKGSNFLVEEFMLLANMTAAEVISQAYRASSLLRRHPEPNTRKLKEFEGFCSKHGMDLDISSSGQLQDSLEKITGNLKDDSVFVDILNNYAIKPMQLASYFCTGNLKDSVAEWGHYALAVPLYTHFTSPLRRYPDIVVHRALAAALEAEELYSKQKQTAIDEGRSCFTGIHFNKDAAESIEGKEALSVAALKHGVPSTEILSDVAAYCNERKLAARKVRDACDKLYTWFVLKQKEIFPCEARVMNLGSRFMTVYISKLGIERRIYYDQIEGLCADWLEATSTLIVDKLYSKRGGRGFFKPMKEAVYLVSPCEVCVAKCSALSVHDTESPEAVSIDEVAPAVFPLTIQLFSTIPVVLHAVGGDDGPLDIGARLYMSSYY</sequence>
<feature type="chain" id="PRO_0000423297" description="Inactive exonuclease DIS3L2">
    <location>
        <begin position="1"/>
        <end position="1055"/>
    </location>
</feature>
<feature type="domain" description="CSD2" evidence="1">
    <location>
        <begin position="367"/>
        <end position="446"/>
    </location>
</feature>
<feature type="domain" description="RNB" evidence="1">
    <location>
        <begin position="476"/>
        <end position="824"/>
    </location>
</feature>
<feature type="region of interest" description="Disordered" evidence="3">
    <location>
        <begin position="1"/>
        <end position="109"/>
    </location>
</feature>
<feature type="region of interest" description="Disordered" evidence="3">
    <location>
        <begin position="229"/>
        <end position="249"/>
    </location>
</feature>
<feature type="compositionally biased region" description="Basic residues" evidence="3">
    <location>
        <begin position="17"/>
        <end position="32"/>
    </location>
</feature>
<feature type="compositionally biased region" description="Basic and acidic residues" evidence="3">
    <location>
        <begin position="39"/>
        <end position="59"/>
    </location>
</feature>
<feature type="compositionally biased region" description="Low complexity" evidence="3">
    <location>
        <begin position="97"/>
        <end position="108"/>
    </location>
</feature>
<feature type="binding site" evidence="2">
    <location>
        <position position="488"/>
    </location>
    <ligand>
        <name>Mg(2+)</name>
        <dbReference type="ChEBI" id="CHEBI:18420"/>
    </ligand>
</feature>
<feature type="binding site" evidence="2">
    <location>
        <position position="497"/>
    </location>
    <ligand>
        <name>Mg(2+)</name>
        <dbReference type="ChEBI" id="CHEBI:18420"/>
    </ligand>
</feature>
<feature type="sequence conflict" description="In Ref. 3; BAD94251." evidence="9" ref="3">
    <original>Y</original>
    <variation>F</variation>
    <location>
        <position position="903"/>
    </location>
</feature>
<organism>
    <name type="scientific">Arabidopsis thaliana</name>
    <name type="common">Mouse-ear cress</name>
    <dbReference type="NCBI Taxonomy" id="3702"/>
    <lineage>
        <taxon>Eukaryota</taxon>
        <taxon>Viridiplantae</taxon>
        <taxon>Streptophyta</taxon>
        <taxon>Embryophyta</taxon>
        <taxon>Tracheophyta</taxon>
        <taxon>Spermatophyta</taxon>
        <taxon>Magnoliopsida</taxon>
        <taxon>eudicotyledons</taxon>
        <taxon>Gunneridae</taxon>
        <taxon>Pentapetalae</taxon>
        <taxon>rosids</taxon>
        <taxon>malvids</taxon>
        <taxon>Brassicales</taxon>
        <taxon>Brassicaceae</taxon>
        <taxon>Camelineae</taxon>
        <taxon>Arabidopsis</taxon>
    </lineage>
</organism>
<evidence type="ECO:0000255" key="1"/>
<evidence type="ECO:0000255" key="2">
    <source>
        <dbReference type="HAMAP-Rule" id="MF_03045"/>
    </source>
</evidence>
<evidence type="ECO:0000256" key="3">
    <source>
        <dbReference type="SAM" id="MobiDB-lite"/>
    </source>
</evidence>
<evidence type="ECO:0000269" key="4">
    <source>
    </source>
</evidence>
<evidence type="ECO:0000269" key="5">
    <source>
    </source>
</evidence>
<evidence type="ECO:0000269" key="6">
    <source>
    </source>
</evidence>
<evidence type="ECO:0000303" key="7">
    <source>
    </source>
</evidence>
<evidence type="ECO:0000303" key="8">
    <source>
    </source>
</evidence>
<evidence type="ECO:0000305" key="9"/>
<accession>Q0WPN0</accession>
<accession>Q56WY4</accession>
<accession>Q9CA26</accession>
<reference key="1">
    <citation type="journal article" date="2000" name="Nature">
        <title>Sequence and analysis of chromosome 1 of the plant Arabidopsis thaliana.</title>
        <authorList>
            <person name="Theologis A."/>
            <person name="Ecker J.R."/>
            <person name="Palm C.J."/>
            <person name="Federspiel N.A."/>
            <person name="Kaul S."/>
            <person name="White O."/>
            <person name="Alonso J."/>
            <person name="Altafi H."/>
            <person name="Araujo R."/>
            <person name="Bowman C.L."/>
            <person name="Brooks S.Y."/>
            <person name="Buehler E."/>
            <person name="Chan A."/>
            <person name="Chao Q."/>
            <person name="Chen H."/>
            <person name="Cheuk R.F."/>
            <person name="Chin C.W."/>
            <person name="Chung M.K."/>
            <person name="Conn L."/>
            <person name="Conway A.B."/>
            <person name="Conway A.R."/>
            <person name="Creasy T.H."/>
            <person name="Dewar K."/>
            <person name="Dunn P."/>
            <person name="Etgu P."/>
            <person name="Feldblyum T.V."/>
            <person name="Feng J.-D."/>
            <person name="Fong B."/>
            <person name="Fujii C.Y."/>
            <person name="Gill J.E."/>
            <person name="Goldsmith A.D."/>
            <person name="Haas B."/>
            <person name="Hansen N.F."/>
            <person name="Hughes B."/>
            <person name="Huizar L."/>
            <person name="Hunter J.L."/>
            <person name="Jenkins J."/>
            <person name="Johnson-Hopson C."/>
            <person name="Khan S."/>
            <person name="Khaykin E."/>
            <person name="Kim C.J."/>
            <person name="Koo H.L."/>
            <person name="Kremenetskaia I."/>
            <person name="Kurtz D.B."/>
            <person name="Kwan A."/>
            <person name="Lam B."/>
            <person name="Langin-Hooper S."/>
            <person name="Lee A."/>
            <person name="Lee J.M."/>
            <person name="Lenz C.A."/>
            <person name="Li J.H."/>
            <person name="Li Y.-P."/>
            <person name="Lin X."/>
            <person name="Liu S.X."/>
            <person name="Liu Z.A."/>
            <person name="Luros J.S."/>
            <person name="Maiti R."/>
            <person name="Marziali A."/>
            <person name="Militscher J."/>
            <person name="Miranda M."/>
            <person name="Nguyen M."/>
            <person name="Nierman W.C."/>
            <person name="Osborne B.I."/>
            <person name="Pai G."/>
            <person name="Peterson J."/>
            <person name="Pham P.K."/>
            <person name="Rizzo M."/>
            <person name="Rooney T."/>
            <person name="Rowley D."/>
            <person name="Sakano H."/>
            <person name="Salzberg S.L."/>
            <person name="Schwartz J.R."/>
            <person name="Shinn P."/>
            <person name="Southwick A.M."/>
            <person name="Sun H."/>
            <person name="Tallon L.J."/>
            <person name="Tambunga G."/>
            <person name="Toriumi M.J."/>
            <person name="Town C.D."/>
            <person name="Utterback T."/>
            <person name="Van Aken S."/>
            <person name="Vaysberg M."/>
            <person name="Vysotskaia V.S."/>
            <person name="Walker M."/>
            <person name="Wu D."/>
            <person name="Yu G."/>
            <person name="Fraser C.M."/>
            <person name="Venter J.C."/>
            <person name="Davis R.W."/>
        </authorList>
    </citation>
    <scope>NUCLEOTIDE SEQUENCE [LARGE SCALE GENOMIC DNA]</scope>
    <source>
        <strain>cv. Columbia</strain>
    </source>
</reference>
<reference key="2">
    <citation type="journal article" date="2017" name="Plant J.">
        <title>Araport11: a complete reannotation of the Arabidopsis thaliana reference genome.</title>
        <authorList>
            <person name="Cheng C.Y."/>
            <person name="Krishnakumar V."/>
            <person name="Chan A.P."/>
            <person name="Thibaud-Nissen F."/>
            <person name="Schobel S."/>
            <person name="Town C.D."/>
        </authorList>
    </citation>
    <scope>GENOME REANNOTATION</scope>
    <source>
        <strain>cv. Columbia</strain>
    </source>
</reference>
<reference key="3">
    <citation type="submission" date="2006-07" db="EMBL/GenBank/DDBJ databases">
        <title>Large-scale analysis of RIKEN Arabidopsis full-length (RAFL) cDNAs.</title>
        <authorList>
            <person name="Totoki Y."/>
            <person name="Seki M."/>
            <person name="Ishida J."/>
            <person name="Nakajima M."/>
            <person name="Enju A."/>
            <person name="Kamiya A."/>
            <person name="Narusaka M."/>
            <person name="Shin-i T."/>
            <person name="Nakagawa M."/>
            <person name="Sakamoto N."/>
            <person name="Oishi K."/>
            <person name="Kohara Y."/>
            <person name="Kobayashi M."/>
            <person name="Toyoda A."/>
            <person name="Sakaki Y."/>
            <person name="Sakurai T."/>
            <person name="Iida K."/>
            <person name="Akiyama K."/>
            <person name="Satou M."/>
            <person name="Toyoda T."/>
            <person name="Konagaya A."/>
            <person name="Carninci P."/>
            <person name="Kawai J."/>
            <person name="Hayashizaki Y."/>
            <person name="Shinozaki K."/>
        </authorList>
    </citation>
    <scope>NUCLEOTIDE SEQUENCE [LARGE SCALE MRNA]</scope>
    <source>
        <strain>cv. Columbia</strain>
    </source>
</reference>
<reference key="4">
    <citation type="journal article" date="2010" name="Proc. Natl. Acad. Sci. U.S.A.">
        <title>Conserved RNaseII domain protein functions in cytoplasmic mRNA decay and suppresses Arabidopsis decapping mutant phenotypes.</title>
        <authorList>
            <person name="Zhang W."/>
            <person name="Murphy C."/>
            <person name="Sieburth L.E."/>
        </authorList>
    </citation>
    <scope>LACK OF FUNCTION</scope>
    <scope>SUBCELLULAR LOCATION</scope>
</reference>
<reference key="5">
    <citation type="journal article" date="2013" name="PLoS ONE">
        <title>Arabidopsis AtRRP44A is the functional homolog of Rrp44/Dis3, an exosome component, is essential for viability and is required for RNA processing and degradation.</title>
        <authorList>
            <person name="Kumakura N."/>
            <person name="Otsuki H."/>
            <person name="Tsuzuki M."/>
            <person name="Takeda A."/>
            <person name="Watanabe Y."/>
        </authorList>
    </citation>
    <scope>FUNCTION</scope>
</reference>
<gene>
    <name evidence="7" type="primary">SOV</name>
    <name type="synonym">DIS3L2</name>
    <name type="ordered locus">At1g77680</name>
    <name type="ORF">T32E8.1</name>
    <name type="ORF">T5M16</name>
</gene>
<dbReference type="EMBL" id="AC010704">
    <property type="status" value="NOT_ANNOTATED_CDS"/>
    <property type="molecule type" value="Genomic_DNA"/>
</dbReference>
<dbReference type="EMBL" id="AC012193">
    <property type="protein sequence ID" value="AAG51632.1"/>
    <property type="molecule type" value="Genomic_DNA"/>
</dbReference>
<dbReference type="EMBL" id="CP002684">
    <property type="protein sequence ID" value="AEE36008.1"/>
    <property type="molecule type" value="Genomic_DNA"/>
</dbReference>
<dbReference type="EMBL" id="AK221895">
    <property type="protein sequence ID" value="BAD94251.1"/>
    <property type="status" value="ALT_INIT"/>
    <property type="molecule type" value="mRNA"/>
</dbReference>
<dbReference type="EMBL" id="AK229034">
    <property type="protein sequence ID" value="BAF00919.1"/>
    <property type="molecule type" value="mRNA"/>
</dbReference>
<dbReference type="PIR" id="E96806">
    <property type="entry name" value="E96806"/>
</dbReference>
<dbReference type="RefSeq" id="NP_177891.1">
    <property type="nucleotide sequence ID" value="NM_106417.3"/>
</dbReference>
<dbReference type="SMR" id="Q0WPN0"/>
<dbReference type="FunCoup" id="Q0WPN0">
    <property type="interactions" value="3757"/>
</dbReference>
<dbReference type="STRING" id="3702.Q0WPN0"/>
<dbReference type="iPTMnet" id="Q0WPN0"/>
<dbReference type="PaxDb" id="3702-AT1G77680.1"/>
<dbReference type="ProteomicsDB" id="224277"/>
<dbReference type="EnsemblPlants" id="AT1G77680.1">
    <property type="protein sequence ID" value="AT1G77680.1"/>
    <property type="gene ID" value="AT1G77680"/>
</dbReference>
<dbReference type="GeneID" id="844104"/>
<dbReference type="Gramene" id="AT1G77680.1">
    <property type="protein sequence ID" value="AT1G77680.1"/>
    <property type="gene ID" value="AT1G77680"/>
</dbReference>
<dbReference type="KEGG" id="ath:AT1G77680"/>
<dbReference type="Araport" id="AT1G77680"/>
<dbReference type="TAIR" id="AT1G77680">
    <property type="gene designation" value="RRP44B"/>
</dbReference>
<dbReference type="eggNOG" id="KOG2102">
    <property type="taxonomic scope" value="Eukaryota"/>
</dbReference>
<dbReference type="HOGENOM" id="CLU_002333_5_2_1"/>
<dbReference type="InParanoid" id="Q0WPN0"/>
<dbReference type="OMA" id="YCKSIAG"/>
<dbReference type="PhylomeDB" id="Q0WPN0"/>
<dbReference type="PRO" id="PR:Q0WPN0"/>
<dbReference type="Proteomes" id="UP000006548">
    <property type="component" value="Chromosome 1"/>
</dbReference>
<dbReference type="ExpressionAtlas" id="Q0WPN0">
    <property type="expression patterns" value="baseline and differential"/>
</dbReference>
<dbReference type="GO" id="GO:0000932">
    <property type="term" value="C:P-body"/>
    <property type="evidence" value="ECO:0007669"/>
    <property type="project" value="UniProtKB-UniRule"/>
</dbReference>
<dbReference type="GO" id="GO:0000175">
    <property type="term" value="F:3'-5'-RNA exonuclease activity"/>
    <property type="evidence" value="ECO:0007669"/>
    <property type="project" value="UniProtKB-UniRule"/>
</dbReference>
<dbReference type="GO" id="GO:0046872">
    <property type="term" value="F:metal ion binding"/>
    <property type="evidence" value="ECO:0007669"/>
    <property type="project" value="UniProtKB-KW"/>
</dbReference>
<dbReference type="GO" id="GO:0003723">
    <property type="term" value="F:RNA binding"/>
    <property type="evidence" value="ECO:0007669"/>
    <property type="project" value="UniProtKB-KW"/>
</dbReference>
<dbReference type="GO" id="GO:0000956">
    <property type="term" value="P:nuclear-transcribed mRNA catabolic process"/>
    <property type="evidence" value="ECO:0007669"/>
    <property type="project" value="UniProtKB-UniRule"/>
</dbReference>
<dbReference type="GO" id="GO:1990074">
    <property type="term" value="P:polyuridylation-dependent mRNA catabolic process"/>
    <property type="evidence" value="ECO:0007669"/>
    <property type="project" value="UniProtKB-UniRule"/>
</dbReference>
<dbReference type="FunFam" id="2.40.50.690:FF:000007">
    <property type="entry name" value="DIS3-like exonuclease 2"/>
    <property type="match status" value="1"/>
</dbReference>
<dbReference type="Gene3D" id="2.40.50.690">
    <property type="match status" value="1"/>
</dbReference>
<dbReference type="Gene3D" id="2.40.50.700">
    <property type="match status" value="1"/>
</dbReference>
<dbReference type="HAMAP" id="MF_03045">
    <property type="entry name" value="DIS3L2"/>
    <property type="match status" value="1"/>
</dbReference>
<dbReference type="InterPro" id="IPR041505">
    <property type="entry name" value="Dis3_CSD2"/>
</dbReference>
<dbReference type="InterPro" id="IPR028591">
    <property type="entry name" value="DIS3L2"/>
</dbReference>
<dbReference type="InterPro" id="IPR012340">
    <property type="entry name" value="NA-bd_OB-fold"/>
</dbReference>
<dbReference type="InterPro" id="IPR001900">
    <property type="entry name" value="RNase_II/R"/>
</dbReference>
<dbReference type="InterPro" id="IPR022966">
    <property type="entry name" value="RNase_II/R_CS"/>
</dbReference>
<dbReference type="InterPro" id="IPR050180">
    <property type="entry name" value="RNR_Ribonuclease"/>
</dbReference>
<dbReference type="PANTHER" id="PTHR23355:SF9">
    <property type="entry name" value="DIS3-LIKE EXONUCLEASE 2"/>
    <property type="match status" value="1"/>
</dbReference>
<dbReference type="PANTHER" id="PTHR23355">
    <property type="entry name" value="RIBONUCLEASE"/>
    <property type="match status" value="1"/>
</dbReference>
<dbReference type="Pfam" id="PF17849">
    <property type="entry name" value="OB_Dis3"/>
    <property type="match status" value="1"/>
</dbReference>
<dbReference type="Pfam" id="PF00773">
    <property type="entry name" value="RNB"/>
    <property type="match status" value="1"/>
</dbReference>
<dbReference type="SMART" id="SM00955">
    <property type="entry name" value="RNB"/>
    <property type="match status" value="1"/>
</dbReference>
<dbReference type="SUPFAM" id="SSF50249">
    <property type="entry name" value="Nucleic acid-binding proteins"/>
    <property type="match status" value="3"/>
</dbReference>
<dbReference type="PROSITE" id="PS01175">
    <property type="entry name" value="RIBONUCLEASE_II"/>
    <property type="match status" value="1"/>
</dbReference>